<name>EFTU_DICNV</name>
<proteinExistence type="inferred from homology"/>
<protein>
    <recommendedName>
        <fullName evidence="2">Elongation factor Tu</fullName>
        <shortName evidence="2">EF-Tu</shortName>
        <ecNumber evidence="2">3.6.5.3</ecNumber>
    </recommendedName>
</protein>
<organism>
    <name type="scientific">Dichelobacter nodosus (strain VCS1703A)</name>
    <dbReference type="NCBI Taxonomy" id="246195"/>
    <lineage>
        <taxon>Bacteria</taxon>
        <taxon>Pseudomonadati</taxon>
        <taxon>Pseudomonadota</taxon>
        <taxon>Gammaproteobacteria</taxon>
        <taxon>Cardiobacteriales</taxon>
        <taxon>Cardiobacteriaceae</taxon>
        <taxon>Dichelobacter</taxon>
    </lineage>
</organism>
<keyword id="KW-0963">Cytoplasm</keyword>
<keyword id="KW-0251">Elongation factor</keyword>
<keyword id="KW-0342">GTP-binding</keyword>
<keyword id="KW-0378">Hydrolase</keyword>
<keyword id="KW-0460">Magnesium</keyword>
<keyword id="KW-0479">Metal-binding</keyword>
<keyword id="KW-0547">Nucleotide-binding</keyword>
<keyword id="KW-0648">Protein biosynthesis</keyword>
<keyword id="KW-1185">Reference proteome</keyword>
<accession>A5EX84</accession>
<evidence type="ECO:0000250" key="1"/>
<evidence type="ECO:0000255" key="2">
    <source>
        <dbReference type="HAMAP-Rule" id="MF_00118"/>
    </source>
</evidence>
<sequence>MSKEKFERAKPHVNVGTIGHVDHGKTTLTAALTKVSAARFGSAAQDYDQIDGAPEERARGITISTSHVEYESPLRHYAHVDCPGHADYVKNMITGAAQMDGAILVCSAADGPMPQTREHILLSRQVGVPYIIVFLNKADMVDDAELLELVEMEVRELLNEYDFPGDDTPIVVGSALKALEGDTSEIGIPAIEKLVDALDASIPEPKRDIDKPFLMPIEDVFSISGRGTVVTGRVERGVVKVGDELEIVGLRDTAKTTCTGVEMFRKLLDQGQAGDNVGVLLRGTKREEVERGQVLAKPGTITPHTKFESEVYVLSKEEGGRHTPFFKGYRPQFYFRTTDVTGECVLPEGVEMVMPGDNVKMIVQLIHPIAMDEGLRFAIREGGRTVGAGVVAKIIE</sequence>
<reference key="1">
    <citation type="journal article" date="2007" name="Nat. Biotechnol.">
        <title>Genome sequence and identification of candidate vaccine antigens from the animal pathogen Dichelobacter nodosus.</title>
        <authorList>
            <person name="Myers G.S.A."/>
            <person name="Parker D."/>
            <person name="Al-Hasani K."/>
            <person name="Kennan R.M."/>
            <person name="Seemann T."/>
            <person name="Ren Q."/>
            <person name="Badger J.H."/>
            <person name="Selengut J.D."/>
            <person name="Deboy R.T."/>
            <person name="Tettelin H."/>
            <person name="Boyce J.D."/>
            <person name="McCarl V.P."/>
            <person name="Han X."/>
            <person name="Nelson W.C."/>
            <person name="Madupu R."/>
            <person name="Mohamoud Y."/>
            <person name="Holley T."/>
            <person name="Fedorova N."/>
            <person name="Khouri H."/>
            <person name="Bottomley S.P."/>
            <person name="Whittington R.J."/>
            <person name="Adler B."/>
            <person name="Songer J.G."/>
            <person name="Rood J.I."/>
            <person name="Paulsen I.T."/>
        </authorList>
    </citation>
    <scope>NUCLEOTIDE SEQUENCE [LARGE SCALE GENOMIC DNA]</scope>
    <source>
        <strain>VCS1703A</strain>
    </source>
</reference>
<comment type="function">
    <text evidence="2">GTP hydrolase that promotes the GTP-dependent binding of aminoacyl-tRNA to the A-site of ribosomes during protein biosynthesis.</text>
</comment>
<comment type="catalytic activity">
    <reaction evidence="2">
        <text>GTP + H2O = GDP + phosphate + H(+)</text>
        <dbReference type="Rhea" id="RHEA:19669"/>
        <dbReference type="ChEBI" id="CHEBI:15377"/>
        <dbReference type="ChEBI" id="CHEBI:15378"/>
        <dbReference type="ChEBI" id="CHEBI:37565"/>
        <dbReference type="ChEBI" id="CHEBI:43474"/>
        <dbReference type="ChEBI" id="CHEBI:58189"/>
        <dbReference type="EC" id="3.6.5.3"/>
    </reaction>
    <physiologicalReaction direction="left-to-right" evidence="2">
        <dbReference type="Rhea" id="RHEA:19670"/>
    </physiologicalReaction>
</comment>
<comment type="subunit">
    <text evidence="2">Monomer.</text>
</comment>
<comment type="subcellular location">
    <subcellularLocation>
        <location evidence="2">Cytoplasm</location>
    </subcellularLocation>
</comment>
<comment type="similarity">
    <text evidence="2">Belongs to the TRAFAC class translation factor GTPase superfamily. Classic translation factor GTPase family. EF-Tu/EF-1A subfamily.</text>
</comment>
<feature type="chain" id="PRO_1000015653" description="Elongation factor Tu">
    <location>
        <begin position="1"/>
        <end position="396"/>
    </location>
</feature>
<feature type="domain" description="tr-type G">
    <location>
        <begin position="10"/>
        <end position="206"/>
    </location>
</feature>
<feature type="region of interest" description="G1" evidence="1">
    <location>
        <begin position="19"/>
        <end position="26"/>
    </location>
</feature>
<feature type="region of interest" description="G2" evidence="1">
    <location>
        <begin position="60"/>
        <end position="64"/>
    </location>
</feature>
<feature type="region of interest" description="G3" evidence="1">
    <location>
        <begin position="81"/>
        <end position="84"/>
    </location>
</feature>
<feature type="region of interest" description="G4" evidence="1">
    <location>
        <begin position="136"/>
        <end position="139"/>
    </location>
</feature>
<feature type="region of interest" description="G5" evidence="1">
    <location>
        <begin position="174"/>
        <end position="176"/>
    </location>
</feature>
<feature type="binding site" evidence="2">
    <location>
        <begin position="19"/>
        <end position="26"/>
    </location>
    <ligand>
        <name>GTP</name>
        <dbReference type="ChEBI" id="CHEBI:37565"/>
    </ligand>
</feature>
<feature type="binding site" evidence="2">
    <location>
        <position position="26"/>
    </location>
    <ligand>
        <name>Mg(2+)</name>
        <dbReference type="ChEBI" id="CHEBI:18420"/>
    </ligand>
</feature>
<feature type="binding site" evidence="2">
    <location>
        <begin position="81"/>
        <end position="85"/>
    </location>
    <ligand>
        <name>GTP</name>
        <dbReference type="ChEBI" id="CHEBI:37565"/>
    </ligand>
</feature>
<feature type="binding site" evidence="2">
    <location>
        <begin position="136"/>
        <end position="139"/>
    </location>
    <ligand>
        <name>GTP</name>
        <dbReference type="ChEBI" id="CHEBI:37565"/>
    </ligand>
</feature>
<dbReference type="EC" id="3.6.5.3" evidence="2"/>
<dbReference type="EMBL" id="CP000513">
    <property type="protein sequence ID" value="ABQ13525.1"/>
    <property type="molecule type" value="Genomic_DNA"/>
</dbReference>
<dbReference type="RefSeq" id="WP_012031572.1">
    <property type="nucleotide sequence ID" value="NC_009446.1"/>
</dbReference>
<dbReference type="SMR" id="A5EX84"/>
<dbReference type="STRING" id="246195.DNO_1277"/>
<dbReference type="KEGG" id="dno:DNO_1277"/>
<dbReference type="eggNOG" id="COG0050">
    <property type="taxonomic scope" value="Bacteria"/>
</dbReference>
<dbReference type="HOGENOM" id="CLU_007265_0_2_6"/>
<dbReference type="OrthoDB" id="9803139at2"/>
<dbReference type="Proteomes" id="UP000000248">
    <property type="component" value="Chromosome"/>
</dbReference>
<dbReference type="GO" id="GO:0005829">
    <property type="term" value="C:cytosol"/>
    <property type="evidence" value="ECO:0007669"/>
    <property type="project" value="TreeGrafter"/>
</dbReference>
<dbReference type="GO" id="GO:0005525">
    <property type="term" value="F:GTP binding"/>
    <property type="evidence" value="ECO:0007669"/>
    <property type="project" value="UniProtKB-UniRule"/>
</dbReference>
<dbReference type="GO" id="GO:0003924">
    <property type="term" value="F:GTPase activity"/>
    <property type="evidence" value="ECO:0007669"/>
    <property type="project" value="InterPro"/>
</dbReference>
<dbReference type="GO" id="GO:0097216">
    <property type="term" value="F:guanosine tetraphosphate binding"/>
    <property type="evidence" value="ECO:0007669"/>
    <property type="project" value="UniProtKB-ARBA"/>
</dbReference>
<dbReference type="GO" id="GO:0003746">
    <property type="term" value="F:translation elongation factor activity"/>
    <property type="evidence" value="ECO:0007669"/>
    <property type="project" value="UniProtKB-UniRule"/>
</dbReference>
<dbReference type="CDD" id="cd01884">
    <property type="entry name" value="EF_Tu"/>
    <property type="match status" value="1"/>
</dbReference>
<dbReference type="CDD" id="cd03697">
    <property type="entry name" value="EFTU_II"/>
    <property type="match status" value="1"/>
</dbReference>
<dbReference type="CDD" id="cd03707">
    <property type="entry name" value="EFTU_III"/>
    <property type="match status" value="1"/>
</dbReference>
<dbReference type="FunFam" id="2.40.30.10:FF:000001">
    <property type="entry name" value="Elongation factor Tu"/>
    <property type="match status" value="1"/>
</dbReference>
<dbReference type="FunFam" id="3.40.50.300:FF:000003">
    <property type="entry name" value="Elongation factor Tu"/>
    <property type="match status" value="1"/>
</dbReference>
<dbReference type="Gene3D" id="3.40.50.300">
    <property type="entry name" value="P-loop containing nucleotide triphosphate hydrolases"/>
    <property type="match status" value="1"/>
</dbReference>
<dbReference type="Gene3D" id="2.40.30.10">
    <property type="entry name" value="Translation factors"/>
    <property type="match status" value="2"/>
</dbReference>
<dbReference type="HAMAP" id="MF_00118_B">
    <property type="entry name" value="EF_Tu_B"/>
    <property type="match status" value="1"/>
</dbReference>
<dbReference type="InterPro" id="IPR041709">
    <property type="entry name" value="EF-Tu_GTP-bd"/>
</dbReference>
<dbReference type="InterPro" id="IPR050055">
    <property type="entry name" value="EF-Tu_GTPase"/>
</dbReference>
<dbReference type="InterPro" id="IPR004161">
    <property type="entry name" value="EFTu-like_2"/>
</dbReference>
<dbReference type="InterPro" id="IPR033720">
    <property type="entry name" value="EFTU_2"/>
</dbReference>
<dbReference type="InterPro" id="IPR031157">
    <property type="entry name" value="G_TR_CS"/>
</dbReference>
<dbReference type="InterPro" id="IPR027417">
    <property type="entry name" value="P-loop_NTPase"/>
</dbReference>
<dbReference type="InterPro" id="IPR005225">
    <property type="entry name" value="Small_GTP-bd"/>
</dbReference>
<dbReference type="InterPro" id="IPR000795">
    <property type="entry name" value="T_Tr_GTP-bd_dom"/>
</dbReference>
<dbReference type="InterPro" id="IPR009000">
    <property type="entry name" value="Transl_B-barrel_sf"/>
</dbReference>
<dbReference type="InterPro" id="IPR009001">
    <property type="entry name" value="Transl_elong_EF1A/Init_IF2_C"/>
</dbReference>
<dbReference type="InterPro" id="IPR004541">
    <property type="entry name" value="Transl_elong_EFTu/EF1A_bac/org"/>
</dbReference>
<dbReference type="InterPro" id="IPR004160">
    <property type="entry name" value="Transl_elong_EFTu/EF1A_C"/>
</dbReference>
<dbReference type="NCBIfam" id="TIGR00485">
    <property type="entry name" value="EF-Tu"/>
    <property type="match status" value="1"/>
</dbReference>
<dbReference type="NCBIfam" id="NF000766">
    <property type="entry name" value="PRK00049.1"/>
    <property type="match status" value="1"/>
</dbReference>
<dbReference type="NCBIfam" id="NF009372">
    <property type="entry name" value="PRK12735.1"/>
    <property type="match status" value="1"/>
</dbReference>
<dbReference type="NCBIfam" id="NF009373">
    <property type="entry name" value="PRK12736.1"/>
    <property type="match status" value="1"/>
</dbReference>
<dbReference type="NCBIfam" id="TIGR00231">
    <property type="entry name" value="small_GTP"/>
    <property type="match status" value="1"/>
</dbReference>
<dbReference type="PANTHER" id="PTHR43721:SF22">
    <property type="entry name" value="ELONGATION FACTOR TU, MITOCHONDRIAL"/>
    <property type="match status" value="1"/>
</dbReference>
<dbReference type="PANTHER" id="PTHR43721">
    <property type="entry name" value="ELONGATION FACTOR TU-RELATED"/>
    <property type="match status" value="1"/>
</dbReference>
<dbReference type="Pfam" id="PF00009">
    <property type="entry name" value="GTP_EFTU"/>
    <property type="match status" value="1"/>
</dbReference>
<dbReference type="Pfam" id="PF03144">
    <property type="entry name" value="GTP_EFTU_D2"/>
    <property type="match status" value="1"/>
</dbReference>
<dbReference type="Pfam" id="PF03143">
    <property type="entry name" value="GTP_EFTU_D3"/>
    <property type="match status" value="1"/>
</dbReference>
<dbReference type="PRINTS" id="PR00315">
    <property type="entry name" value="ELONGATNFCT"/>
</dbReference>
<dbReference type="SUPFAM" id="SSF50465">
    <property type="entry name" value="EF-Tu/eEF-1alpha/eIF2-gamma C-terminal domain"/>
    <property type="match status" value="1"/>
</dbReference>
<dbReference type="SUPFAM" id="SSF52540">
    <property type="entry name" value="P-loop containing nucleoside triphosphate hydrolases"/>
    <property type="match status" value="1"/>
</dbReference>
<dbReference type="SUPFAM" id="SSF50447">
    <property type="entry name" value="Translation proteins"/>
    <property type="match status" value="1"/>
</dbReference>
<dbReference type="PROSITE" id="PS00301">
    <property type="entry name" value="G_TR_1"/>
    <property type="match status" value="1"/>
</dbReference>
<dbReference type="PROSITE" id="PS51722">
    <property type="entry name" value="G_TR_2"/>
    <property type="match status" value="1"/>
</dbReference>
<gene>
    <name evidence="2" type="primary">tuf</name>
    <name type="ordered locus">DNO_1277</name>
</gene>